<evidence type="ECO:0000250" key="1"/>
<evidence type="ECO:0000255" key="2"/>
<evidence type="ECO:0000305" key="3"/>
<dbReference type="EC" id="3.-.-.-"/>
<dbReference type="EMBL" id="CU329671">
    <property type="protein sequence ID" value="CAA22177.1"/>
    <property type="molecule type" value="Genomic_DNA"/>
</dbReference>
<dbReference type="PIR" id="T40657">
    <property type="entry name" value="T40657"/>
</dbReference>
<dbReference type="SMR" id="O94323"/>
<dbReference type="BioGRID" id="277691">
    <property type="interactions" value="34"/>
</dbReference>
<dbReference type="FunCoup" id="O94323">
    <property type="interactions" value="181"/>
</dbReference>
<dbReference type="STRING" id="284812.O94323"/>
<dbReference type="iPTMnet" id="O94323"/>
<dbReference type="PaxDb" id="4896-SPBC725.05c.1"/>
<dbReference type="EnsemblFungi" id="SPBC725.05c.1">
    <property type="protein sequence ID" value="SPBC725.05c.1:pep"/>
    <property type="gene ID" value="SPBC725.05c"/>
</dbReference>
<dbReference type="KEGG" id="spo:2541177"/>
<dbReference type="PomBase" id="SPBC725.05c"/>
<dbReference type="VEuPathDB" id="FungiDB:SPBC725.05c"/>
<dbReference type="eggNOG" id="KOG2645">
    <property type="taxonomic scope" value="Eukaryota"/>
</dbReference>
<dbReference type="HOGENOM" id="CLU_017594_1_2_1"/>
<dbReference type="InParanoid" id="O94323"/>
<dbReference type="OMA" id="IAHNYKN"/>
<dbReference type="PhylomeDB" id="O94323"/>
<dbReference type="Reactome" id="R-SPO-196843">
    <property type="pathway name" value="Vitamin B2 (riboflavin) metabolism"/>
</dbReference>
<dbReference type="Reactome" id="R-SPO-6798695">
    <property type="pathway name" value="Neutrophil degranulation"/>
</dbReference>
<dbReference type="Reactome" id="R-SPO-6814848">
    <property type="pathway name" value="Glycerophospholipid catabolism"/>
</dbReference>
<dbReference type="Reactome" id="R-SPO-9840310">
    <property type="pathway name" value="Glycosphingolipid catabolism"/>
</dbReference>
<dbReference type="PRO" id="PR:O94323"/>
<dbReference type="Proteomes" id="UP000002485">
    <property type="component" value="Chromosome II"/>
</dbReference>
<dbReference type="GO" id="GO:0016020">
    <property type="term" value="C:membrane"/>
    <property type="evidence" value="ECO:0007669"/>
    <property type="project" value="UniProtKB-SubCell"/>
</dbReference>
<dbReference type="GO" id="GO:0004551">
    <property type="term" value="F:dinucleotide phosphatase activity"/>
    <property type="evidence" value="ECO:0000266"/>
    <property type="project" value="PomBase"/>
</dbReference>
<dbReference type="GO" id="GO:0047429">
    <property type="term" value="F:nucleoside triphosphate diphosphatase activity"/>
    <property type="evidence" value="ECO:0000318"/>
    <property type="project" value="GO_Central"/>
</dbReference>
<dbReference type="GO" id="GO:0017111">
    <property type="term" value="F:ribonucleoside triphosphate phosphatase activity"/>
    <property type="evidence" value="ECO:0000318"/>
    <property type="project" value="GO_Central"/>
</dbReference>
<dbReference type="GO" id="GO:0009141">
    <property type="term" value="P:nucleoside triphosphate metabolic process"/>
    <property type="evidence" value="ECO:0000318"/>
    <property type="project" value="GO_Central"/>
</dbReference>
<dbReference type="CDD" id="cd16018">
    <property type="entry name" value="Enpp"/>
    <property type="match status" value="1"/>
</dbReference>
<dbReference type="FunFam" id="3.30.1360.180:FF:000003">
    <property type="entry name" value="Type I phosphodiesterase/nucleotide pyrophosphatase family protein"/>
    <property type="match status" value="1"/>
</dbReference>
<dbReference type="Gene3D" id="3.30.1360.180">
    <property type="match status" value="1"/>
</dbReference>
<dbReference type="Gene3D" id="3.40.720.10">
    <property type="entry name" value="Alkaline Phosphatase, subunit A"/>
    <property type="match status" value="1"/>
</dbReference>
<dbReference type="InterPro" id="IPR017850">
    <property type="entry name" value="Alkaline_phosphatase_core_sf"/>
</dbReference>
<dbReference type="InterPro" id="IPR002591">
    <property type="entry name" value="Phosphodiest/P_Trfase"/>
</dbReference>
<dbReference type="PANTHER" id="PTHR10151:SF120">
    <property type="entry name" value="BIS(5'-ADENOSYL)-TRIPHOSPHATASE"/>
    <property type="match status" value="1"/>
</dbReference>
<dbReference type="PANTHER" id="PTHR10151">
    <property type="entry name" value="ECTONUCLEOTIDE PYROPHOSPHATASE/PHOSPHODIESTERASE"/>
    <property type="match status" value="1"/>
</dbReference>
<dbReference type="Pfam" id="PF01663">
    <property type="entry name" value="Phosphodiest"/>
    <property type="match status" value="1"/>
</dbReference>
<dbReference type="SUPFAM" id="SSF53649">
    <property type="entry name" value="Alkaline phosphatase-like"/>
    <property type="match status" value="1"/>
</dbReference>
<protein>
    <recommendedName>
        <fullName>Uncharacterized pyrophosphatase/phosphodiesterase C725.05c</fullName>
        <ecNumber>3.-.-.-</ecNumber>
    </recommendedName>
</protein>
<comment type="subcellular location">
    <subcellularLocation>
        <location evidence="3">Membrane</location>
        <topology evidence="3">Single-pass type II membrane protein</topology>
    </subcellularLocation>
</comment>
<comment type="similarity">
    <text evidence="3">Belongs to the nucleotide pyrophosphatase/phosphodiesterase family.</text>
</comment>
<reference key="1">
    <citation type="journal article" date="2002" name="Nature">
        <title>The genome sequence of Schizosaccharomyces pombe.</title>
        <authorList>
            <person name="Wood V."/>
            <person name="Gwilliam R."/>
            <person name="Rajandream M.A."/>
            <person name="Lyne M.H."/>
            <person name="Lyne R."/>
            <person name="Stewart A."/>
            <person name="Sgouros J.G."/>
            <person name="Peat N."/>
            <person name="Hayles J."/>
            <person name="Baker S.G."/>
            <person name="Basham D."/>
            <person name="Bowman S."/>
            <person name="Brooks K."/>
            <person name="Brown D."/>
            <person name="Brown S."/>
            <person name="Chillingworth T."/>
            <person name="Churcher C.M."/>
            <person name="Collins M."/>
            <person name="Connor R."/>
            <person name="Cronin A."/>
            <person name="Davis P."/>
            <person name="Feltwell T."/>
            <person name="Fraser A."/>
            <person name="Gentles S."/>
            <person name="Goble A."/>
            <person name="Hamlin N."/>
            <person name="Harris D.E."/>
            <person name="Hidalgo J."/>
            <person name="Hodgson G."/>
            <person name="Holroyd S."/>
            <person name="Hornsby T."/>
            <person name="Howarth S."/>
            <person name="Huckle E.J."/>
            <person name="Hunt S."/>
            <person name="Jagels K."/>
            <person name="James K.D."/>
            <person name="Jones L."/>
            <person name="Jones M."/>
            <person name="Leather S."/>
            <person name="McDonald S."/>
            <person name="McLean J."/>
            <person name="Mooney P."/>
            <person name="Moule S."/>
            <person name="Mungall K.L."/>
            <person name="Murphy L.D."/>
            <person name="Niblett D."/>
            <person name="Odell C."/>
            <person name="Oliver K."/>
            <person name="O'Neil S."/>
            <person name="Pearson D."/>
            <person name="Quail M.A."/>
            <person name="Rabbinowitsch E."/>
            <person name="Rutherford K.M."/>
            <person name="Rutter S."/>
            <person name="Saunders D."/>
            <person name="Seeger K."/>
            <person name="Sharp S."/>
            <person name="Skelton J."/>
            <person name="Simmonds M.N."/>
            <person name="Squares R."/>
            <person name="Squares S."/>
            <person name="Stevens K."/>
            <person name="Taylor K."/>
            <person name="Taylor R.G."/>
            <person name="Tivey A."/>
            <person name="Walsh S.V."/>
            <person name="Warren T."/>
            <person name="Whitehead S."/>
            <person name="Woodward J.R."/>
            <person name="Volckaert G."/>
            <person name="Aert R."/>
            <person name="Robben J."/>
            <person name="Grymonprez B."/>
            <person name="Weltjens I."/>
            <person name="Vanstreels E."/>
            <person name="Rieger M."/>
            <person name="Schaefer M."/>
            <person name="Mueller-Auer S."/>
            <person name="Gabel C."/>
            <person name="Fuchs M."/>
            <person name="Duesterhoeft A."/>
            <person name="Fritzc C."/>
            <person name="Holzer E."/>
            <person name="Moestl D."/>
            <person name="Hilbert H."/>
            <person name="Borzym K."/>
            <person name="Langer I."/>
            <person name="Beck A."/>
            <person name="Lehrach H."/>
            <person name="Reinhardt R."/>
            <person name="Pohl T.M."/>
            <person name="Eger P."/>
            <person name="Zimmermann W."/>
            <person name="Wedler H."/>
            <person name="Wambutt R."/>
            <person name="Purnelle B."/>
            <person name="Goffeau A."/>
            <person name="Cadieu E."/>
            <person name="Dreano S."/>
            <person name="Gloux S."/>
            <person name="Lelaure V."/>
            <person name="Mottier S."/>
            <person name="Galibert F."/>
            <person name="Aves S.J."/>
            <person name="Xiang Z."/>
            <person name="Hunt C."/>
            <person name="Moore K."/>
            <person name="Hurst S.M."/>
            <person name="Lucas M."/>
            <person name="Rochet M."/>
            <person name="Gaillardin C."/>
            <person name="Tallada V.A."/>
            <person name="Garzon A."/>
            <person name="Thode G."/>
            <person name="Daga R.R."/>
            <person name="Cruzado L."/>
            <person name="Jimenez J."/>
            <person name="Sanchez M."/>
            <person name="del Rey F."/>
            <person name="Benito J."/>
            <person name="Dominguez A."/>
            <person name="Revuelta J.L."/>
            <person name="Moreno S."/>
            <person name="Armstrong J."/>
            <person name="Forsburg S.L."/>
            <person name="Cerutti L."/>
            <person name="Lowe T."/>
            <person name="McCombie W.R."/>
            <person name="Paulsen I."/>
            <person name="Potashkin J."/>
            <person name="Shpakovski G.V."/>
            <person name="Ussery D."/>
            <person name="Barrell B.G."/>
            <person name="Nurse P."/>
        </authorList>
    </citation>
    <scope>NUCLEOTIDE SEQUENCE [LARGE SCALE GENOMIC DNA]</scope>
    <source>
        <strain>972 / ATCC 24843</strain>
    </source>
</reference>
<sequence>MFSWANIGSNEYLPLKNDRKAYLNQWAKRSGLAIAAICILGILILAIVKLFCFKAIIFPIVGGSFNNGTNVFQSTVIVISLDGFRADYLYRGFTPNLLSLAERNVHVPFLIPSFPSITFPNHYTIVTGLYPESHGIVSNNFFDPVTGKQFVNSMPECNKDPTWWDKGEPIWVNAERNNVRSAVHMWPGNEVENHGYRPTYSDGFNFDTTLREKKDRILEWLDLPDKDRPQLLLAYAPHVDMVGHAFGPDSPELNIIIQEVDIVIGELIEGLKKRNIDKHVNIIFLSDHGMAPTSDNRLIWLDNMFNLSAVAHRDAWPLGGFRGESDLDDEYIYESLVNYSRSSLPSAENWNVYSKKDIPSRWHYSNNERIAPVWMIPDVGWSLVSMLDHSPELEYEPLGVHGYDNLSPVMRALFIASGSSFKNFKGKKLAPFQNTEIYGILSHILDLPAQPNNGTYEGALPLRRNRNSTKEWLLKDIEQAYSKLI</sequence>
<keyword id="KW-0325">Glycoprotein</keyword>
<keyword id="KW-0378">Hydrolase</keyword>
<keyword id="KW-0472">Membrane</keyword>
<keyword id="KW-1185">Reference proteome</keyword>
<keyword id="KW-0735">Signal-anchor</keyword>
<keyword id="KW-0812">Transmembrane</keyword>
<keyword id="KW-1133">Transmembrane helix</keyword>
<proteinExistence type="inferred from homology"/>
<gene>
    <name type="ORF">SPBC725.05c</name>
</gene>
<accession>O94323</accession>
<feature type="chain" id="PRO_0000317129" description="Uncharacterized pyrophosphatase/phosphodiesterase C725.05c">
    <location>
        <begin position="1"/>
        <end position="485"/>
    </location>
</feature>
<feature type="topological domain" description="Cytoplasmic" evidence="2">
    <location>
        <begin position="1"/>
        <end position="30"/>
    </location>
</feature>
<feature type="transmembrane region" description="Helical" evidence="2">
    <location>
        <begin position="31"/>
        <end position="51"/>
    </location>
</feature>
<feature type="topological domain" description="Extracellular" evidence="2">
    <location>
        <begin position="52"/>
        <end position="485"/>
    </location>
</feature>
<feature type="region of interest" description="Phosphodiesterase" evidence="1">
    <location>
        <begin position="74"/>
        <end position="404"/>
    </location>
</feature>
<feature type="active site" description="Nucleophile" evidence="1">
    <location>
        <position position="118"/>
    </location>
</feature>
<feature type="glycosylation site" description="N-linked (GlcNAc...) asparagine" evidence="2">
    <location>
        <position position="67"/>
    </location>
</feature>
<feature type="glycosylation site" description="N-linked (GlcNAc...) asparagine" evidence="2">
    <location>
        <position position="306"/>
    </location>
</feature>
<feature type="glycosylation site" description="N-linked (GlcNAc...) asparagine" evidence="2">
    <location>
        <position position="338"/>
    </location>
</feature>
<feature type="glycosylation site" description="N-linked (GlcNAc...) asparagine" evidence="2">
    <location>
        <position position="453"/>
    </location>
</feature>
<feature type="glycosylation site" description="N-linked (GlcNAc...) asparagine" evidence="2">
    <location>
        <position position="467"/>
    </location>
</feature>
<organism>
    <name type="scientific">Schizosaccharomyces pombe (strain 972 / ATCC 24843)</name>
    <name type="common">Fission yeast</name>
    <dbReference type="NCBI Taxonomy" id="284812"/>
    <lineage>
        <taxon>Eukaryota</taxon>
        <taxon>Fungi</taxon>
        <taxon>Dikarya</taxon>
        <taxon>Ascomycota</taxon>
        <taxon>Taphrinomycotina</taxon>
        <taxon>Schizosaccharomycetes</taxon>
        <taxon>Schizosaccharomycetales</taxon>
        <taxon>Schizosaccharomycetaceae</taxon>
        <taxon>Schizosaccharomyces</taxon>
    </lineage>
</organism>
<name>YGK5_SCHPO</name>